<organism>
    <name type="scientific">Aspergillus terreus (strain NIH 2624 / FGSC A1156)</name>
    <dbReference type="NCBI Taxonomy" id="341663"/>
    <lineage>
        <taxon>Eukaryota</taxon>
        <taxon>Fungi</taxon>
        <taxon>Dikarya</taxon>
        <taxon>Ascomycota</taxon>
        <taxon>Pezizomycotina</taxon>
        <taxon>Eurotiomycetes</taxon>
        <taxon>Eurotiomycetidae</taxon>
        <taxon>Eurotiales</taxon>
        <taxon>Aspergillaceae</taxon>
        <taxon>Aspergillus</taxon>
        <taxon>Aspergillus subgen. Circumdati</taxon>
    </lineage>
</organism>
<evidence type="ECO:0000250" key="1"/>
<evidence type="ECO:0000255" key="2"/>
<evidence type="ECO:0000305" key="3"/>
<name>AGALD_ASPTN</name>
<keyword id="KW-0119">Carbohydrate metabolism</keyword>
<keyword id="KW-1015">Disulfide bond</keyword>
<keyword id="KW-0325">Glycoprotein</keyword>
<keyword id="KW-0326">Glycosidase</keyword>
<keyword id="KW-0378">Hydrolase</keyword>
<keyword id="KW-0624">Polysaccharide degradation</keyword>
<keyword id="KW-1185">Reference proteome</keyword>
<keyword id="KW-0964">Secreted</keyword>
<keyword id="KW-0732">Signal</keyword>
<sequence length="655" mass="71135">MASVIALSLLLPAAFAADHSPLRARLQDGLARTPQMGWNTYNHYNCYPDEEIFRSNAKALVDFGLADLGYRYATIDCGWTLTERLANGSLTWNATRFPSGFPAIADYLHDLGLLFGVYGDAGIKLCGPSDEHEEQDAQTFAAWGADSLKYDNCFSEASLGYPNVEYAPSSPLKPRYEVMSNALQKLDRPILFQICEWGIDFPALWAPALGHSWRIGNDIIPAWRSVFRTLNQAVPQTDFAGPGQWPDLDMLMVGNGVYSVPEEETHFSLWAILKSPLIIGSALKDATTEINSESLRILKQKAVIGYNQDKLGVSASLRRRWTDQGYEVWSGPLSNGRTVAAVINWRGEARDLTLDLPDIGLQSAGLVKNIWAGSTSRNVQTSYTARVEGHGTMLLELRDTVPAGVYPKKIFGSSRGQGTVFKSVYAGSTSENYTLAINFAKTIPSASKITVQVGANRQKLSIAVPPSRQQVTATIPLVAGSNNTITISHSHPITAIQVTSPNGTYYPATQFSLTGAARHETCGEGFCQPVGSKVSYLSPNSTARGVIPASAGTKYVEIDYINNEVAFSSSWGWGANSRNLTISLNGGEPVRLEVPLSGRHSELFGPGKGWWDTATLGVSVDGWKEGDNEVVVGNVNGEKGFQPYAADFVGLRVFD</sequence>
<protein>
    <recommendedName>
        <fullName>Probable alpha-galactosidase D</fullName>
        <ecNumber>3.2.1.22</ecNumber>
    </recommendedName>
    <alternativeName>
        <fullName>Melibiase D</fullName>
    </alternativeName>
</protein>
<comment type="function">
    <text evidence="1">Hydrolyzes a variety of simple alpha-D-galactoside as well as more complex molecules such as oligosaccharides and polysaccharides.</text>
</comment>
<comment type="catalytic activity">
    <reaction>
        <text>Hydrolysis of terminal, non-reducing alpha-D-galactose residues in alpha-D-galactosides, including galactose oligosaccharides, galactomannans and galactolipids.</text>
        <dbReference type="EC" id="3.2.1.22"/>
    </reaction>
</comment>
<comment type="subcellular location">
    <subcellularLocation>
        <location evidence="1">Secreted</location>
    </subcellularLocation>
</comment>
<comment type="similarity">
    <text evidence="3">Belongs to the glycosyl hydrolase 27 family.</text>
</comment>
<proteinExistence type="inferred from homology"/>
<gene>
    <name type="primary">aglD</name>
    <name type="ORF">ATEG_02160</name>
</gene>
<feature type="signal peptide" evidence="2">
    <location>
        <begin position="1"/>
        <end position="16"/>
    </location>
</feature>
<feature type="chain" id="PRO_0000395074" description="Probable alpha-galactosidase D">
    <location>
        <begin position="17"/>
        <end position="655"/>
    </location>
</feature>
<feature type="active site" description="Nucleophile" evidence="1">
    <location>
        <position position="151"/>
    </location>
</feature>
<feature type="active site" description="Proton donor" evidence="1">
    <location>
        <position position="218"/>
    </location>
</feature>
<feature type="binding site" evidence="1">
    <location>
        <begin position="196"/>
        <end position="200"/>
    </location>
    <ligand>
        <name>substrate</name>
    </ligand>
</feature>
<feature type="glycosylation site" description="N-linked (GlcNAc...) asparagine" evidence="2">
    <location>
        <position position="87"/>
    </location>
</feature>
<feature type="glycosylation site" description="N-linked (GlcNAc...) asparagine" evidence="2">
    <location>
        <position position="93"/>
    </location>
</feature>
<feature type="glycosylation site" description="N-linked (GlcNAc...) asparagine" evidence="2">
    <location>
        <position position="432"/>
    </location>
</feature>
<feature type="glycosylation site" description="N-linked (GlcNAc...) asparagine" evidence="2">
    <location>
        <position position="482"/>
    </location>
</feature>
<feature type="glycosylation site" description="N-linked (GlcNAc...) asparagine" evidence="2">
    <location>
        <position position="502"/>
    </location>
</feature>
<feature type="glycosylation site" description="N-linked (GlcNAc...) asparagine" evidence="2">
    <location>
        <position position="540"/>
    </location>
</feature>
<feature type="glycosylation site" description="N-linked (GlcNAc...) asparagine" evidence="2">
    <location>
        <position position="579"/>
    </location>
</feature>
<feature type="disulfide bond" evidence="1">
    <location>
        <begin position="126"/>
        <end position="153"/>
    </location>
</feature>
<reference key="1">
    <citation type="submission" date="2005-09" db="EMBL/GenBank/DDBJ databases">
        <title>Annotation of the Aspergillus terreus NIH2624 genome.</title>
        <authorList>
            <person name="Birren B.W."/>
            <person name="Lander E.S."/>
            <person name="Galagan J.E."/>
            <person name="Nusbaum C."/>
            <person name="Devon K."/>
            <person name="Henn M."/>
            <person name="Ma L.-J."/>
            <person name="Jaffe D.B."/>
            <person name="Butler J."/>
            <person name="Alvarez P."/>
            <person name="Gnerre S."/>
            <person name="Grabherr M."/>
            <person name="Kleber M."/>
            <person name="Mauceli E.W."/>
            <person name="Brockman W."/>
            <person name="Rounsley S."/>
            <person name="Young S.K."/>
            <person name="LaButti K."/>
            <person name="Pushparaj V."/>
            <person name="DeCaprio D."/>
            <person name="Crawford M."/>
            <person name="Koehrsen M."/>
            <person name="Engels R."/>
            <person name="Montgomery P."/>
            <person name="Pearson M."/>
            <person name="Howarth C."/>
            <person name="Larson L."/>
            <person name="Luoma S."/>
            <person name="White J."/>
            <person name="Alvarado L."/>
            <person name="Kodira C.D."/>
            <person name="Zeng Q."/>
            <person name="Oleary S."/>
            <person name="Yandava C."/>
            <person name="Denning D.W."/>
            <person name="Nierman W.C."/>
            <person name="Milne T."/>
            <person name="Madden K."/>
        </authorList>
    </citation>
    <scope>NUCLEOTIDE SEQUENCE [LARGE SCALE GENOMIC DNA]</scope>
    <source>
        <strain>NIH 2624 / FGSC A1156</strain>
    </source>
</reference>
<dbReference type="EC" id="3.2.1.22"/>
<dbReference type="EMBL" id="CH476596">
    <property type="protein sequence ID" value="EAU37122.1"/>
    <property type="molecule type" value="Genomic_DNA"/>
</dbReference>
<dbReference type="RefSeq" id="XP_001211338.1">
    <property type="nucleotide sequence ID" value="XM_001211338.1"/>
</dbReference>
<dbReference type="SMR" id="Q0CVX4"/>
<dbReference type="STRING" id="341663.Q0CVX4"/>
<dbReference type="GlyCosmos" id="Q0CVX4">
    <property type="glycosylation" value="7 sites, No reported glycans"/>
</dbReference>
<dbReference type="GeneID" id="4317058"/>
<dbReference type="eggNOG" id="KOG2366">
    <property type="taxonomic scope" value="Eukaryota"/>
</dbReference>
<dbReference type="OrthoDB" id="5795902at2759"/>
<dbReference type="Proteomes" id="UP000007963">
    <property type="component" value="Unassembled WGS sequence"/>
</dbReference>
<dbReference type="GO" id="GO:0005576">
    <property type="term" value="C:extracellular region"/>
    <property type="evidence" value="ECO:0007669"/>
    <property type="project" value="UniProtKB-SubCell"/>
</dbReference>
<dbReference type="GO" id="GO:0004557">
    <property type="term" value="F:alpha-galactosidase activity"/>
    <property type="evidence" value="ECO:0007669"/>
    <property type="project" value="UniProtKB-EC"/>
</dbReference>
<dbReference type="GO" id="GO:0000272">
    <property type="term" value="P:polysaccharide catabolic process"/>
    <property type="evidence" value="ECO:0007669"/>
    <property type="project" value="UniProtKB-KW"/>
</dbReference>
<dbReference type="CDD" id="cd04081">
    <property type="entry name" value="CBM35_galactosidase-like"/>
    <property type="match status" value="1"/>
</dbReference>
<dbReference type="CDD" id="cd14792">
    <property type="entry name" value="GH27"/>
    <property type="match status" value="1"/>
</dbReference>
<dbReference type="FunFam" id="2.60.40.1180:FF:000008">
    <property type="entry name" value="Alpha-galactosidase"/>
    <property type="match status" value="1"/>
</dbReference>
<dbReference type="FunFam" id="3.20.20.70:FF:000197">
    <property type="entry name" value="Alpha-galactosidase"/>
    <property type="match status" value="1"/>
</dbReference>
<dbReference type="Gene3D" id="3.20.20.70">
    <property type="entry name" value="Aldolase class I"/>
    <property type="match status" value="1"/>
</dbReference>
<dbReference type="Gene3D" id="2.60.120.260">
    <property type="entry name" value="Galactose-binding domain-like"/>
    <property type="match status" value="2"/>
</dbReference>
<dbReference type="Gene3D" id="2.60.40.1180">
    <property type="entry name" value="Golgi alpha-mannosidase II"/>
    <property type="match status" value="1"/>
</dbReference>
<dbReference type="InterPro" id="IPR013785">
    <property type="entry name" value="Aldolase_TIM"/>
</dbReference>
<dbReference type="InterPro" id="IPR002241">
    <property type="entry name" value="Glyco_hydro_27"/>
</dbReference>
<dbReference type="InterPro" id="IPR013780">
    <property type="entry name" value="Glyco_hydro_b"/>
</dbReference>
<dbReference type="InterPro" id="IPR017853">
    <property type="entry name" value="Glycoside_hydrolase_SF"/>
</dbReference>
<dbReference type="InterPro" id="IPR041233">
    <property type="entry name" value="Melibiase_C"/>
</dbReference>
<dbReference type="PANTHER" id="PTHR11452:SF75">
    <property type="entry name" value="ALPHA-GALACTOSIDASE MEL1"/>
    <property type="match status" value="1"/>
</dbReference>
<dbReference type="PANTHER" id="PTHR11452">
    <property type="entry name" value="ALPHA-GALACTOSIDASE/ALPHA-N-ACETYLGALACTOSAMINIDASE"/>
    <property type="match status" value="1"/>
</dbReference>
<dbReference type="Pfam" id="PF16499">
    <property type="entry name" value="Melibiase_2"/>
    <property type="match status" value="1"/>
</dbReference>
<dbReference type="Pfam" id="PF17801">
    <property type="entry name" value="Melibiase_C"/>
    <property type="match status" value="1"/>
</dbReference>
<dbReference type="PRINTS" id="PR00740">
    <property type="entry name" value="GLHYDRLASE27"/>
</dbReference>
<dbReference type="SUPFAM" id="SSF51445">
    <property type="entry name" value="(Trans)glycosidases"/>
    <property type="match status" value="1"/>
</dbReference>
<dbReference type="SUPFAM" id="SSF51011">
    <property type="entry name" value="Glycosyl hydrolase domain"/>
    <property type="match status" value="1"/>
</dbReference>
<accession>Q0CVX4</accession>